<feature type="chain" id="PRO_0000288789" description="Serine/threonine-protein phosphatase Pgam5, mitochondrial">
    <location>
        <begin position="1"/>
        <end position="289"/>
    </location>
</feature>
<feature type="transmembrane region" description="Helical" evidence="2">
    <location>
        <begin position="7"/>
        <end position="23"/>
    </location>
</feature>
<evidence type="ECO:0000250" key="1"/>
<evidence type="ECO:0000255" key="2"/>
<evidence type="ECO:0000269" key="3">
    <source>
    </source>
</evidence>
<evidence type="ECO:0000305" key="4"/>
<dbReference type="EC" id="3.1.3.16"/>
<dbReference type="EMBL" id="AE014298">
    <property type="protein sequence ID" value="AAF45678.1"/>
    <property type="molecule type" value="Genomic_DNA"/>
</dbReference>
<dbReference type="EMBL" id="AL021106">
    <property type="protein sequence ID" value="CAA15939.1"/>
    <property type="molecule type" value="Genomic_DNA"/>
</dbReference>
<dbReference type="EMBL" id="AY060608">
    <property type="protein sequence ID" value="AAL28156.2"/>
    <property type="status" value="ALT_INIT"/>
    <property type="molecule type" value="mRNA"/>
</dbReference>
<dbReference type="PIR" id="T12682">
    <property type="entry name" value="T12682"/>
</dbReference>
<dbReference type="RefSeq" id="NP_569951.1">
    <property type="nucleotide sequence ID" value="NM_130595.3"/>
</dbReference>
<dbReference type="SMR" id="O46084"/>
<dbReference type="BioGRID" id="57689">
    <property type="interactions" value="35"/>
</dbReference>
<dbReference type="DIP" id="DIP-18549N"/>
<dbReference type="FunCoup" id="O46084">
    <property type="interactions" value="1039"/>
</dbReference>
<dbReference type="IntAct" id="O46084">
    <property type="interactions" value="27"/>
</dbReference>
<dbReference type="STRING" id="7227.FBpp0070350"/>
<dbReference type="PaxDb" id="7227-FBpp0070350"/>
<dbReference type="DNASU" id="31143"/>
<dbReference type="EnsemblMetazoa" id="FBtr0070366">
    <property type="protein sequence ID" value="FBpp0070350"/>
    <property type="gene ID" value="FBgn0023517"/>
</dbReference>
<dbReference type="GeneID" id="31143"/>
<dbReference type="KEGG" id="dme:Dmel_CG14816"/>
<dbReference type="UCSC" id="CG14816-RA">
    <property type="organism name" value="d. melanogaster"/>
</dbReference>
<dbReference type="AGR" id="FB:FBgn0023517"/>
<dbReference type="CTD" id="192111"/>
<dbReference type="FlyBase" id="FBgn0023517">
    <property type="gene designation" value="Pgam5"/>
</dbReference>
<dbReference type="VEuPathDB" id="VectorBase:FBgn0023517"/>
<dbReference type="eggNOG" id="KOG4609">
    <property type="taxonomic scope" value="Eukaryota"/>
</dbReference>
<dbReference type="GeneTree" id="ENSGT00390000004796"/>
<dbReference type="HOGENOM" id="CLU_063130_0_1_1"/>
<dbReference type="InParanoid" id="O46084"/>
<dbReference type="OMA" id="MPMEMIT"/>
<dbReference type="OrthoDB" id="2118094at2759"/>
<dbReference type="PhylomeDB" id="O46084"/>
<dbReference type="Reactome" id="R-DME-8934903">
    <property type="pathway name" value="Receptor Mediated Mitophagy"/>
</dbReference>
<dbReference type="Reactome" id="R-DME-9861718">
    <property type="pathway name" value="Regulation of pyruvate metabolism"/>
</dbReference>
<dbReference type="SignaLink" id="O46084"/>
<dbReference type="BioGRID-ORCS" id="31143">
    <property type="hits" value="0 hits in 3 CRISPR screens"/>
</dbReference>
<dbReference type="GenomeRNAi" id="31143"/>
<dbReference type="PRO" id="PR:O46084"/>
<dbReference type="Proteomes" id="UP000000803">
    <property type="component" value="Chromosome X"/>
</dbReference>
<dbReference type="Bgee" id="FBgn0023517">
    <property type="expression patterns" value="Expressed in secondary oocyte and 74 other cell types or tissues"/>
</dbReference>
<dbReference type="ExpressionAtlas" id="O46084">
    <property type="expression patterns" value="baseline and differential"/>
</dbReference>
<dbReference type="GO" id="GO:0016020">
    <property type="term" value="C:membrane"/>
    <property type="evidence" value="ECO:0000255"/>
    <property type="project" value="FlyBase"/>
</dbReference>
<dbReference type="GO" id="GO:0005741">
    <property type="term" value="C:mitochondrial outer membrane"/>
    <property type="evidence" value="ECO:0007669"/>
    <property type="project" value="UniProtKB-SubCell"/>
</dbReference>
<dbReference type="GO" id="GO:0005739">
    <property type="term" value="C:mitochondrion"/>
    <property type="evidence" value="ECO:0000250"/>
    <property type="project" value="FlyBase"/>
</dbReference>
<dbReference type="GO" id="GO:0019900">
    <property type="term" value="F:kinase binding"/>
    <property type="evidence" value="ECO:0000353"/>
    <property type="project" value="UniProtKB"/>
</dbReference>
<dbReference type="GO" id="GO:0004721">
    <property type="term" value="F:phosphoprotein phosphatase activity"/>
    <property type="evidence" value="ECO:0000314"/>
    <property type="project" value="UniProtKB"/>
</dbReference>
<dbReference type="GO" id="GO:0043539">
    <property type="term" value="F:protein serine/threonine kinase activator activity"/>
    <property type="evidence" value="ECO:0000314"/>
    <property type="project" value="FlyBase"/>
</dbReference>
<dbReference type="GO" id="GO:0004722">
    <property type="term" value="F:protein serine/threonine phosphatase activity"/>
    <property type="evidence" value="ECO:0000314"/>
    <property type="project" value="FlyBase"/>
</dbReference>
<dbReference type="GO" id="GO:0090141">
    <property type="term" value="P:positive regulation of mitochondrial fission"/>
    <property type="evidence" value="ECO:0000314"/>
    <property type="project" value="FlyBase"/>
</dbReference>
<dbReference type="GO" id="GO:0010636">
    <property type="term" value="P:positive regulation of mitochondrial fusion"/>
    <property type="evidence" value="ECO:0000316"/>
    <property type="project" value="FlyBase"/>
</dbReference>
<dbReference type="GO" id="GO:0006470">
    <property type="term" value="P:protein dephosphorylation"/>
    <property type="evidence" value="ECO:0000314"/>
    <property type="project" value="UniProtKB"/>
</dbReference>
<dbReference type="GO" id="GO:0010821">
    <property type="term" value="P:regulation of mitochondrion organization"/>
    <property type="evidence" value="ECO:0000315"/>
    <property type="project" value="FlyBase"/>
</dbReference>
<dbReference type="GO" id="GO:0072347">
    <property type="term" value="P:response to anesthetic"/>
    <property type="evidence" value="ECO:0000315"/>
    <property type="project" value="FlyBase"/>
</dbReference>
<dbReference type="GO" id="GO:0009408">
    <property type="term" value="P:response to heat"/>
    <property type="evidence" value="ECO:0000315"/>
    <property type="project" value="FlyBase"/>
</dbReference>
<dbReference type="CDD" id="cd07067">
    <property type="entry name" value="HP_PGM_like"/>
    <property type="match status" value="1"/>
</dbReference>
<dbReference type="FunFam" id="3.40.50.1240:FF:000009">
    <property type="entry name" value="serine/threonine-protein phosphatase PGAM5, mitochondrial isoform X1"/>
    <property type="match status" value="1"/>
</dbReference>
<dbReference type="Gene3D" id="3.40.50.1240">
    <property type="entry name" value="Phosphoglycerate mutase-like"/>
    <property type="match status" value="1"/>
</dbReference>
<dbReference type="InterPro" id="IPR013078">
    <property type="entry name" value="His_Pase_superF_clade-1"/>
</dbReference>
<dbReference type="InterPro" id="IPR029033">
    <property type="entry name" value="His_PPase_superfam"/>
</dbReference>
<dbReference type="InterPro" id="IPR051021">
    <property type="entry name" value="Mito_Ser/Thr_phosphatase"/>
</dbReference>
<dbReference type="PANTHER" id="PTHR20935">
    <property type="entry name" value="PHOSPHOGLYCERATE MUTASE-RELATED"/>
    <property type="match status" value="1"/>
</dbReference>
<dbReference type="PANTHER" id="PTHR20935:SF0">
    <property type="entry name" value="SERINE_THREONINE-PROTEIN PHOSPHATASE PGAM5, MITOCHONDRIAL"/>
    <property type="match status" value="1"/>
</dbReference>
<dbReference type="Pfam" id="PF00300">
    <property type="entry name" value="His_Phos_1"/>
    <property type="match status" value="2"/>
</dbReference>
<dbReference type="SMART" id="SM00855">
    <property type="entry name" value="PGAM"/>
    <property type="match status" value="1"/>
</dbReference>
<dbReference type="SUPFAM" id="SSF53254">
    <property type="entry name" value="Phosphoglycerate mutase-like"/>
    <property type="match status" value="1"/>
</dbReference>
<gene>
    <name type="primary">Pgam5</name>
    <name type="ORF">CG14816</name>
</gene>
<protein>
    <recommendedName>
        <fullName>Serine/threonine-protein phosphatase Pgam5, mitochondrial</fullName>
        <shortName>DPGAM5</shortName>
        <ecNumber>3.1.3.16</ecNumber>
    </recommendedName>
    <alternativeName>
        <fullName>Phosphoglycerate mutase family member 5 homolog</fullName>
    </alternativeName>
</protein>
<accession>O46084</accession>
<accession>Q7K2X2</accession>
<reference key="1">
    <citation type="journal article" date="2000" name="Science">
        <title>The genome sequence of Drosophila melanogaster.</title>
        <authorList>
            <person name="Adams M.D."/>
            <person name="Celniker S.E."/>
            <person name="Holt R.A."/>
            <person name="Evans C.A."/>
            <person name="Gocayne J.D."/>
            <person name="Amanatides P.G."/>
            <person name="Scherer S.E."/>
            <person name="Li P.W."/>
            <person name="Hoskins R.A."/>
            <person name="Galle R.F."/>
            <person name="George R.A."/>
            <person name="Lewis S.E."/>
            <person name="Richards S."/>
            <person name="Ashburner M."/>
            <person name="Henderson S.N."/>
            <person name="Sutton G.G."/>
            <person name="Wortman J.R."/>
            <person name="Yandell M.D."/>
            <person name="Zhang Q."/>
            <person name="Chen L.X."/>
            <person name="Brandon R.C."/>
            <person name="Rogers Y.-H.C."/>
            <person name="Blazej R.G."/>
            <person name="Champe M."/>
            <person name="Pfeiffer B.D."/>
            <person name="Wan K.H."/>
            <person name="Doyle C."/>
            <person name="Baxter E.G."/>
            <person name="Helt G."/>
            <person name="Nelson C.R."/>
            <person name="Miklos G.L.G."/>
            <person name="Abril J.F."/>
            <person name="Agbayani A."/>
            <person name="An H.-J."/>
            <person name="Andrews-Pfannkoch C."/>
            <person name="Baldwin D."/>
            <person name="Ballew R.M."/>
            <person name="Basu A."/>
            <person name="Baxendale J."/>
            <person name="Bayraktaroglu L."/>
            <person name="Beasley E.M."/>
            <person name="Beeson K.Y."/>
            <person name="Benos P.V."/>
            <person name="Berman B.P."/>
            <person name="Bhandari D."/>
            <person name="Bolshakov S."/>
            <person name="Borkova D."/>
            <person name="Botchan M.R."/>
            <person name="Bouck J."/>
            <person name="Brokstein P."/>
            <person name="Brottier P."/>
            <person name="Burtis K.C."/>
            <person name="Busam D.A."/>
            <person name="Butler H."/>
            <person name="Cadieu E."/>
            <person name="Center A."/>
            <person name="Chandra I."/>
            <person name="Cherry J.M."/>
            <person name="Cawley S."/>
            <person name="Dahlke C."/>
            <person name="Davenport L.B."/>
            <person name="Davies P."/>
            <person name="de Pablos B."/>
            <person name="Delcher A."/>
            <person name="Deng Z."/>
            <person name="Mays A.D."/>
            <person name="Dew I."/>
            <person name="Dietz S.M."/>
            <person name="Dodson K."/>
            <person name="Doup L.E."/>
            <person name="Downes M."/>
            <person name="Dugan-Rocha S."/>
            <person name="Dunkov B.C."/>
            <person name="Dunn P."/>
            <person name="Durbin K.J."/>
            <person name="Evangelista C.C."/>
            <person name="Ferraz C."/>
            <person name="Ferriera S."/>
            <person name="Fleischmann W."/>
            <person name="Fosler C."/>
            <person name="Gabrielian A.E."/>
            <person name="Garg N.S."/>
            <person name="Gelbart W.M."/>
            <person name="Glasser K."/>
            <person name="Glodek A."/>
            <person name="Gong F."/>
            <person name="Gorrell J.H."/>
            <person name="Gu Z."/>
            <person name="Guan P."/>
            <person name="Harris M."/>
            <person name="Harris N.L."/>
            <person name="Harvey D.A."/>
            <person name="Heiman T.J."/>
            <person name="Hernandez J.R."/>
            <person name="Houck J."/>
            <person name="Hostin D."/>
            <person name="Houston K.A."/>
            <person name="Howland T.J."/>
            <person name="Wei M.-H."/>
            <person name="Ibegwam C."/>
            <person name="Jalali M."/>
            <person name="Kalush F."/>
            <person name="Karpen G.H."/>
            <person name="Ke Z."/>
            <person name="Kennison J.A."/>
            <person name="Ketchum K.A."/>
            <person name="Kimmel B.E."/>
            <person name="Kodira C.D."/>
            <person name="Kraft C.L."/>
            <person name="Kravitz S."/>
            <person name="Kulp D."/>
            <person name="Lai Z."/>
            <person name="Lasko P."/>
            <person name="Lei Y."/>
            <person name="Levitsky A.A."/>
            <person name="Li J.H."/>
            <person name="Li Z."/>
            <person name="Liang Y."/>
            <person name="Lin X."/>
            <person name="Liu X."/>
            <person name="Mattei B."/>
            <person name="McIntosh T.C."/>
            <person name="McLeod M.P."/>
            <person name="McPherson D."/>
            <person name="Merkulov G."/>
            <person name="Milshina N.V."/>
            <person name="Mobarry C."/>
            <person name="Morris J."/>
            <person name="Moshrefi A."/>
            <person name="Mount S.M."/>
            <person name="Moy M."/>
            <person name="Murphy B."/>
            <person name="Murphy L."/>
            <person name="Muzny D.M."/>
            <person name="Nelson D.L."/>
            <person name="Nelson D.R."/>
            <person name="Nelson K.A."/>
            <person name="Nixon K."/>
            <person name="Nusskern D.R."/>
            <person name="Pacleb J.M."/>
            <person name="Palazzolo M."/>
            <person name="Pittman G.S."/>
            <person name="Pan S."/>
            <person name="Pollard J."/>
            <person name="Puri V."/>
            <person name="Reese M.G."/>
            <person name="Reinert K."/>
            <person name="Remington K."/>
            <person name="Saunders R.D.C."/>
            <person name="Scheeler F."/>
            <person name="Shen H."/>
            <person name="Shue B.C."/>
            <person name="Siden-Kiamos I."/>
            <person name="Simpson M."/>
            <person name="Skupski M.P."/>
            <person name="Smith T.J."/>
            <person name="Spier E."/>
            <person name="Spradling A.C."/>
            <person name="Stapleton M."/>
            <person name="Strong R."/>
            <person name="Sun E."/>
            <person name="Svirskas R."/>
            <person name="Tector C."/>
            <person name="Turner R."/>
            <person name="Venter E."/>
            <person name="Wang A.H."/>
            <person name="Wang X."/>
            <person name="Wang Z.-Y."/>
            <person name="Wassarman D.A."/>
            <person name="Weinstock G.M."/>
            <person name="Weissenbach J."/>
            <person name="Williams S.M."/>
            <person name="Woodage T."/>
            <person name="Worley K.C."/>
            <person name="Wu D."/>
            <person name="Yang S."/>
            <person name="Yao Q.A."/>
            <person name="Ye J."/>
            <person name="Yeh R.-F."/>
            <person name="Zaveri J.S."/>
            <person name="Zhan M."/>
            <person name="Zhang G."/>
            <person name="Zhao Q."/>
            <person name="Zheng L."/>
            <person name="Zheng X.H."/>
            <person name="Zhong F.N."/>
            <person name="Zhong W."/>
            <person name="Zhou X."/>
            <person name="Zhu S.C."/>
            <person name="Zhu X."/>
            <person name="Smith H.O."/>
            <person name="Gibbs R.A."/>
            <person name="Myers E.W."/>
            <person name="Rubin G.M."/>
            <person name="Venter J.C."/>
        </authorList>
    </citation>
    <scope>NUCLEOTIDE SEQUENCE [LARGE SCALE GENOMIC DNA]</scope>
    <source>
        <strain>Berkeley</strain>
    </source>
</reference>
<reference key="2">
    <citation type="journal article" date="2002" name="Genome Biol.">
        <title>Annotation of the Drosophila melanogaster euchromatic genome: a systematic review.</title>
        <authorList>
            <person name="Misra S."/>
            <person name="Crosby M.A."/>
            <person name="Mungall C.J."/>
            <person name="Matthews B.B."/>
            <person name="Campbell K.S."/>
            <person name="Hradecky P."/>
            <person name="Huang Y."/>
            <person name="Kaminker J.S."/>
            <person name="Millburn G.H."/>
            <person name="Prochnik S.E."/>
            <person name="Smith C.D."/>
            <person name="Tupy J.L."/>
            <person name="Whitfield E.J."/>
            <person name="Bayraktaroglu L."/>
            <person name="Berman B.P."/>
            <person name="Bettencourt B.R."/>
            <person name="Celniker S.E."/>
            <person name="de Grey A.D.N.J."/>
            <person name="Drysdale R.A."/>
            <person name="Harris N.L."/>
            <person name="Richter J."/>
            <person name="Russo S."/>
            <person name="Schroeder A.J."/>
            <person name="Shu S.Q."/>
            <person name="Stapleton M."/>
            <person name="Yamada C."/>
            <person name="Ashburner M."/>
            <person name="Gelbart W.M."/>
            <person name="Rubin G.M."/>
            <person name="Lewis S.E."/>
        </authorList>
    </citation>
    <scope>GENOME REANNOTATION</scope>
    <source>
        <strain>Berkeley</strain>
    </source>
</reference>
<reference key="3">
    <citation type="journal article" date="2000" name="Science">
        <title>From sequence to chromosome: the tip of the X chromosome of D. melanogaster.</title>
        <authorList>
            <person name="Benos P.V."/>
            <person name="Gatt M.K."/>
            <person name="Ashburner M."/>
            <person name="Murphy L."/>
            <person name="Harris D."/>
            <person name="Barrell B.G."/>
            <person name="Ferraz C."/>
            <person name="Vidal S."/>
            <person name="Brun C."/>
            <person name="Demailles J."/>
            <person name="Cadieu E."/>
            <person name="Dreano S."/>
            <person name="Gloux S."/>
            <person name="Lelaure V."/>
            <person name="Mottier S."/>
            <person name="Galibert F."/>
            <person name="Borkova D."/>
            <person name="Minana B."/>
            <person name="Kafatos F.C."/>
            <person name="Louis C."/>
            <person name="Siden-Kiamos I."/>
            <person name="Bolshakov S."/>
            <person name="Papagiannakis G."/>
            <person name="Spanos L."/>
            <person name="Cox S."/>
            <person name="Madueno E."/>
            <person name="de Pablos B."/>
            <person name="Modolell J."/>
            <person name="Peter A."/>
            <person name="Schoettler P."/>
            <person name="Werner M."/>
            <person name="Mourkioti F."/>
            <person name="Beinert N."/>
            <person name="Dowe G."/>
            <person name="Schaefer U."/>
            <person name="Jaeckle H."/>
            <person name="Bucheton A."/>
            <person name="Callister D.M."/>
            <person name="Campbell L.A."/>
            <person name="Darlamitsou A."/>
            <person name="Henderson N.S."/>
            <person name="McMillan P.J."/>
            <person name="Salles C."/>
            <person name="Tait E.A."/>
            <person name="Valenti P."/>
            <person name="Saunders R.D.C."/>
            <person name="Glover D.M."/>
        </authorList>
    </citation>
    <scope>NUCLEOTIDE SEQUENCE [LARGE SCALE GENOMIC DNA]</scope>
    <source>
        <strain>Oregon-R</strain>
    </source>
</reference>
<reference key="4">
    <citation type="journal article" date="2002" name="Genome Biol.">
        <title>A Drosophila full-length cDNA resource.</title>
        <authorList>
            <person name="Stapleton M."/>
            <person name="Carlson J.W."/>
            <person name="Brokstein P."/>
            <person name="Yu C."/>
            <person name="Champe M."/>
            <person name="George R.A."/>
            <person name="Guarin H."/>
            <person name="Kronmiller B."/>
            <person name="Pacleb J.M."/>
            <person name="Park S."/>
            <person name="Wan K.H."/>
            <person name="Rubin G.M."/>
            <person name="Celniker S.E."/>
        </authorList>
    </citation>
    <scope>NUCLEOTIDE SEQUENCE [LARGE SCALE MRNA]</scope>
    <source>
        <strain>Berkeley</strain>
        <tissue>Head</tissue>
    </source>
</reference>
<reference key="5">
    <citation type="journal article" date="2009" name="Proc. Natl. Acad. Sci. U.S.A.">
        <title>Mitochondrial phosphoglycerate mutase 5 uses alternate catalytic activity as a protein serine/threonine phosphatase to activate ASK1.</title>
        <authorList>
            <person name="Takeda K."/>
            <person name="Komuro Y."/>
            <person name="Hayakawa T."/>
            <person name="Oguchi H."/>
            <person name="Ishida Y."/>
            <person name="Murakami S."/>
            <person name="Noguchi T."/>
            <person name="Kinoshita H."/>
            <person name="Sekine Y."/>
            <person name="Iemura S."/>
            <person name="Natsume T."/>
            <person name="Ichijo H."/>
        </authorList>
    </citation>
    <scope>FUNCTION</scope>
    <scope>CATALYTIC ACTIVITY</scope>
    <scope>INTERACTION WITH PK92B</scope>
</reference>
<organism>
    <name type="scientific">Drosophila melanogaster</name>
    <name type="common">Fruit fly</name>
    <dbReference type="NCBI Taxonomy" id="7227"/>
    <lineage>
        <taxon>Eukaryota</taxon>
        <taxon>Metazoa</taxon>
        <taxon>Ecdysozoa</taxon>
        <taxon>Arthropoda</taxon>
        <taxon>Hexapoda</taxon>
        <taxon>Insecta</taxon>
        <taxon>Pterygota</taxon>
        <taxon>Neoptera</taxon>
        <taxon>Endopterygota</taxon>
        <taxon>Diptera</taxon>
        <taxon>Brachycera</taxon>
        <taxon>Muscomorpha</taxon>
        <taxon>Ephydroidea</taxon>
        <taxon>Drosophilidae</taxon>
        <taxon>Drosophila</taxon>
        <taxon>Sophophora</taxon>
    </lineage>
</organism>
<name>PGAM5_DROME</name>
<sequence>MRKLTSFVCGTGAGLAAYYLQRLRDPQTVVQNSWTHSDKPVDPWALWDTNWDCREPRALVRPLRNSQPEEENRYNAELEKAKAKKARHIILVRHGEYLDVGDSDDTHHLTERGRKQAEFTGKRLCELGIKWDKVVASTMVRAQETSDIILKQIDFEKEKVVNCAFLREGAPIPPQPPVGHWKPEASQFLRDGSRIEAGFRRYFHRAYPDQEKESYTLIVGHGNVIRYFVCRALQFPAEGWLRININHASITWLTISPSGNVSIKYLGDSGFMPAELLTNRIPRDVKNVV</sequence>
<proteinExistence type="evidence at protein level"/>
<comment type="function">
    <text evidence="3">Displays phosphatase activity for serine/threonine residues, and dephosphorylates and activates Pk92B kinase. Has apparently no phosphoglycerate mutase activity.</text>
</comment>
<comment type="catalytic activity">
    <reaction evidence="3">
        <text>O-phospho-L-seryl-[protein] + H2O = L-seryl-[protein] + phosphate</text>
        <dbReference type="Rhea" id="RHEA:20629"/>
        <dbReference type="Rhea" id="RHEA-COMP:9863"/>
        <dbReference type="Rhea" id="RHEA-COMP:11604"/>
        <dbReference type="ChEBI" id="CHEBI:15377"/>
        <dbReference type="ChEBI" id="CHEBI:29999"/>
        <dbReference type="ChEBI" id="CHEBI:43474"/>
        <dbReference type="ChEBI" id="CHEBI:83421"/>
        <dbReference type="EC" id="3.1.3.16"/>
    </reaction>
</comment>
<comment type="catalytic activity">
    <reaction evidence="3">
        <text>O-phospho-L-threonyl-[protein] + H2O = L-threonyl-[protein] + phosphate</text>
        <dbReference type="Rhea" id="RHEA:47004"/>
        <dbReference type="Rhea" id="RHEA-COMP:11060"/>
        <dbReference type="Rhea" id="RHEA-COMP:11605"/>
        <dbReference type="ChEBI" id="CHEBI:15377"/>
        <dbReference type="ChEBI" id="CHEBI:30013"/>
        <dbReference type="ChEBI" id="CHEBI:43474"/>
        <dbReference type="ChEBI" id="CHEBI:61977"/>
        <dbReference type="EC" id="3.1.3.16"/>
    </reaction>
</comment>
<comment type="subunit">
    <text evidence="3">Interacts with Pk92B/ASK1.</text>
</comment>
<comment type="subcellular location">
    <subcellularLocation>
        <location evidence="1">Mitochondrion outer membrane</location>
        <topology evidence="1">Single-pass membrane protein</topology>
    </subcellularLocation>
</comment>
<comment type="similarity">
    <text evidence="4">Belongs to the phosphoglycerate mutase family. BPG-dependent PGAM subfamily.</text>
</comment>
<comment type="sequence caution" evidence="4">
    <conflict type="erroneous initiation">
        <sequence resource="EMBL-CDS" id="AAL28156"/>
    </conflict>
</comment>
<keyword id="KW-0378">Hydrolase</keyword>
<keyword id="KW-0472">Membrane</keyword>
<keyword id="KW-0496">Mitochondrion</keyword>
<keyword id="KW-1000">Mitochondrion outer membrane</keyword>
<keyword id="KW-1185">Reference proteome</keyword>
<keyword id="KW-0812">Transmembrane</keyword>
<keyword id="KW-1133">Transmembrane helix</keyword>